<comment type="function">
    <text evidence="1">Catalyzes the ferrous insertion into protoporphyrin IX.</text>
</comment>
<comment type="catalytic activity">
    <reaction evidence="1">
        <text>heme b + 2 H(+) = protoporphyrin IX + Fe(2+)</text>
        <dbReference type="Rhea" id="RHEA:22584"/>
        <dbReference type="ChEBI" id="CHEBI:15378"/>
        <dbReference type="ChEBI" id="CHEBI:29033"/>
        <dbReference type="ChEBI" id="CHEBI:57306"/>
        <dbReference type="ChEBI" id="CHEBI:60344"/>
        <dbReference type="EC" id="4.98.1.1"/>
    </reaction>
</comment>
<comment type="pathway">
    <text evidence="1">Porphyrin-containing compound metabolism; protoheme biosynthesis; protoheme from protoporphyrin-IX: step 1/1.</text>
</comment>
<comment type="subunit">
    <text evidence="1">Monomer.</text>
</comment>
<comment type="subcellular location">
    <subcellularLocation>
        <location evidence="1">Cytoplasm</location>
    </subcellularLocation>
</comment>
<comment type="similarity">
    <text evidence="1">Belongs to the ferrochelatase family.</text>
</comment>
<organism>
    <name type="scientific">Escherichia coli (strain SMS-3-5 / SECEC)</name>
    <dbReference type="NCBI Taxonomy" id="439855"/>
    <lineage>
        <taxon>Bacteria</taxon>
        <taxon>Pseudomonadati</taxon>
        <taxon>Pseudomonadota</taxon>
        <taxon>Gammaproteobacteria</taxon>
        <taxon>Enterobacterales</taxon>
        <taxon>Enterobacteriaceae</taxon>
        <taxon>Escherichia</taxon>
    </lineage>
</organism>
<keyword id="KW-0963">Cytoplasm</keyword>
<keyword id="KW-0350">Heme biosynthesis</keyword>
<keyword id="KW-0408">Iron</keyword>
<keyword id="KW-0456">Lyase</keyword>
<keyword id="KW-0479">Metal-binding</keyword>
<keyword id="KW-0627">Porphyrin biosynthesis</keyword>
<protein>
    <recommendedName>
        <fullName evidence="1">Ferrochelatase</fullName>
        <ecNumber evidence="1">4.98.1.1</ecNumber>
    </recommendedName>
    <alternativeName>
        <fullName evidence="1">Heme synthase</fullName>
    </alternativeName>
    <alternativeName>
        <fullName evidence="1">Protoheme ferro-lyase</fullName>
    </alternativeName>
</protein>
<evidence type="ECO:0000255" key="1">
    <source>
        <dbReference type="HAMAP-Rule" id="MF_00323"/>
    </source>
</evidence>
<sequence length="320" mass="35923">MRQTKTGILLANLGTPDAPTPEAVKRYLKQFLSDRRVVDTSRLLWWPLLRGVILPLRSPRVAKLYASVWMEGGSPLMVYSRQQQQALAQRLPETPVALGMSYGSPSLESAVDELLAEHVDHIVVLPLYPQYSCSTVGAVWDELARILARKRSIPGISFIRDYADNHDYINALANSVRASFAKHGEPDLLLLSYHGIPQRYADEGDDYPQHCRTTTRELASALEMAPEKVMMTFQSRFGREPWLMPYTDETLKMLGEKGVGHIQVMCPGFAADCLETLEEIAEQNREVFLGAGGKKYEYIPALNATPEHIEMMANLVAAYR</sequence>
<accession>B1LJN3</accession>
<name>HEMH_ECOSM</name>
<proteinExistence type="inferred from homology"/>
<gene>
    <name evidence="1" type="primary">hemH</name>
    <name type="ordered locus">EcSMS35_0520</name>
</gene>
<dbReference type="EC" id="4.98.1.1" evidence="1"/>
<dbReference type="EMBL" id="CP000970">
    <property type="protein sequence ID" value="ACB16222.1"/>
    <property type="molecule type" value="Genomic_DNA"/>
</dbReference>
<dbReference type="RefSeq" id="WP_001250112.1">
    <property type="nucleotide sequence ID" value="NC_010498.1"/>
</dbReference>
<dbReference type="SMR" id="B1LJN3"/>
<dbReference type="KEGG" id="ecm:EcSMS35_0520"/>
<dbReference type="HOGENOM" id="CLU_018884_0_0_6"/>
<dbReference type="UniPathway" id="UPA00252">
    <property type="reaction ID" value="UER00325"/>
</dbReference>
<dbReference type="Proteomes" id="UP000007011">
    <property type="component" value="Chromosome"/>
</dbReference>
<dbReference type="GO" id="GO:0005737">
    <property type="term" value="C:cytoplasm"/>
    <property type="evidence" value="ECO:0007669"/>
    <property type="project" value="UniProtKB-SubCell"/>
</dbReference>
<dbReference type="GO" id="GO:0004325">
    <property type="term" value="F:ferrochelatase activity"/>
    <property type="evidence" value="ECO:0007669"/>
    <property type="project" value="UniProtKB-UniRule"/>
</dbReference>
<dbReference type="GO" id="GO:0046872">
    <property type="term" value="F:metal ion binding"/>
    <property type="evidence" value="ECO:0007669"/>
    <property type="project" value="UniProtKB-KW"/>
</dbReference>
<dbReference type="GO" id="GO:0006783">
    <property type="term" value="P:heme biosynthetic process"/>
    <property type="evidence" value="ECO:0007669"/>
    <property type="project" value="UniProtKB-UniRule"/>
</dbReference>
<dbReference type="CDD" id="cd00419">
    <property type="entry name" value="Ferrochelatase_C"/>
    <property type="match status" value="1"/>
</dbReference>
<dbReference type="CDD" id="cd03411">
    <property type="entry name" value="Ferrochelatase_N"/>
    <property type="match status" value="1"/>
</dbReference>
<dbReference type="FunFam" id="3.40.50.1400:FF:000004">
    <property type="entry name" value="Ferrochelatase"/>
    <property type="match status" value="1"/>
</dbReference>
<dbReference type="Gene3D" id="3.40.50.1400">
    <property type="match status" value="2"/>
</dbReference>
<dbReference type="HAMAP" id="MF_00323">
    <property type="entry name" value="Ferrochelatase"/>
    <property type="match status" value="1"/>
</dbReference>
<dbReference type="InterPro" id="IPR001015">
    <property type="entry name" value="Ferrochelatase"/>
</dbReference>
<dbReference type="InterPro" id="IPR019772">
    <property type="entry name" value="Ferrochelatase_AS"/>
</dbReference>
<dbReference type="InterPro" id="IPR033644">
    <property type="entry name" value="Ferrochelatase_C"/>
</dbReference>
<dbReference type="InterPro" id="IPR033659">
    <property type="entry name" value="Ferrochelatase_N"/>
</dbReference>
<dbReference type="NCBIfam" id="TIGR00109">
    <property type="entry name" value="hemH"/>
    <property type="match status" value="1"/>
</dbReference>
<dbReference type="PANTHER" id="PTHR11108">
    <property type="entry name" value="FERROCHELATASE"/>
    <property type="match status" value="1"/>
</dbReference>
<dbReference type="PANTHER" id="PTHR11108:SF1">
    <property type="entry name" value="FERROCHELATASE, MITOCHONDRIAL"/>
    <property type="match status" value="1"/>
</dbReference>
<dbReference type="Pfam" id="PF00762">
    <property type="entry name" value="Ferrochelatase"/>
    <property type="match status" value="1"/>
</dbReference>
<dbReference type="SUPFAM" id="SSF53800">
    <property type="entry name" value="Chelatase"/>
    <property type="match status" value="1"/>
</dbReference>
<dbReference type="PROSITE" id="PS00534">
    <property type="entry name" value="FERROCHELATASE"/>
    <property type="match status" value="1"/>
</dbReference>
<feature type="chain" id="PRO_1000119610" description="Ferrochelatase">
    <location>
        <begin position="1"/>
        <end position="320"/>
    </location>
</feature>
<feature type="binding site" evidence="1">
    <location>
        <position position="194"/>
    </location>
    <ligand>
        <name>Fe cation</name>
        <dbReference type="ChEBI" id="CHEBI:24875"/>
    </ligand>
</feature>
<feature type="binding site" evidence="1">
    <location>
        <position position="275"/>
    </location>
    <ligand>
        <name>Fe cation</name>
        <dbReference type="ChEBI" id="CHEBI:24875"/>
    </ligand>
</feature>
<reference key="1">
    <citation type="journal article" date="2008" name="J. Bacteriol.">
        <title>Insights into the environmental resistance gene pool from the genome sequence of the multidrug-resistant environmental isolate Escherichia coli SMS-3-5.</title>
        <authorList>
            <person name="Fricke W.F."/>
            <person name="Wright M.S."/>
            <person name="Lindell A.H."/>
            <person name="Harkins D.M."/>
            <person name="Baker-Austin C."/>
            <person name="Ravel J."/>
            <person name="Stepanauskas R."/>
        </authorList>
    </citation>
    <scope>NUCLEOTIDE SEQUENCE [LARGE SCALE GENOMIC DNA]</scope>
    <source>
        <strain>SMS-3-5 / SECEC</strain>
    </source>
</reference>